<feature type="chain" id="PRO_1000084062" description="Imidazole glycerol phosphate synthase subunit HisF">
    <location>
        <begin position="1"/>
        <end position="258"/>
    </location>
</feature>
<feature type="active site" evidence="1">
    <location>
        <position position="11"/>
    </location>
</feature>
<feature type="active site" evidence="1">
    <location>
        <position position="130"/>
    </location>
</feature>
<feature type="sequence conflict" description="In Ref. 2; ACI51401." evidence="2" ref="2">
    <original>C</original>
    <variation>R</variation>
    <location>
        <position position="189"/>
    </location>
</feature>
<feature type="sequence conflict" description="In Ref. 2; ACI51401." evidence="2" ref="2">
    <original>V</original>
    <variation>A</variation>
    <location>
        <position position="257"/>
    </location>
</feature>
<sequence length="258" mass="27199">MLKLRVIPCLDVKNGRVVKGVNFVSLRDAGDPVEQAAVYDAAGADELTFLDITASHENRDTILDVVSRTAERIFLPLTVGGGVRTTDDMRRLLLAGADKCAMNSAAVARPDLVSEAARKFGSQCVVVAVDARSDGHGSWEVYTHGGRTPTGRNVIDWCREVVERGAGEILLTSMDRDGTGSGFDLDLLCAACTAVRVPIVASGGVGTLEHFVEGARAGATGLLAASVFHFGQFTIPQVKQALADAGLPVRHTPAHPVP</sequence>
<dbReference type="EC" id="4.3.2.10" evidence="1"/>
<dbReference type="EMBL" id="AM889285">
    <property type="protein sequence ID" value="CAP54012.1"/>
    <property type="molecule type" value="Genomic_DNA"/>
</dbReference>
<dbReference type="EMBL" id="CP001189">
    <property type="protein sequence ID" value="ACI51401.1"/>
    <property type="molecule type" value="Genomic_DNA"/>
</dbReference>
<dbReference type="RefSeq" id="WP_012222316.1">
    <property type="nucleotide sequence ID" value="NC_010125.1"/>
</dbReference>
<dbReference type="RefSeq" id="WP_012553884.1">
    <property type="nucleotide sequence ID" value="NC_011365.1"/>
</dbReference>
<dbReference type="SMR" id="A9GZW9"/>
<dbReference type="STRING" id="272568.GDI0069"/>
<dbReference type="KEGG" id="gdi:GDI0069"/>
<dbReference type="KEGG" id="gdj:Gdia_1623"/>
<dbReference type="eggNOG" id="COG0107">
    <property type="taxonomic scope" value="Bacteria"/>
</dbReference>
<dbReference type="HOGENOM" id="CLU_048577_4_0_5"/>
<dbReference type="OrthoDB" id="9781903at2"/>
<dbReference type="UniPathway" id="UPA00031">
    <property type="reaction ID" value="UER00010"/>
</dbReference>
<dbReference type="Proteomes" id="UP000001176">
    <property type="component" value="Chromosome"/>
</dbReference>
<dbReference type="GO" id="GO:0005737">
    <property type="term" value="C:cytoplasm"/>
    <property type="evidence" value="ECO:0007669"/>
    <property type="project" value="UniProtKB-SubCell"/>
</dbReference>
<dbReference type="GO" id="GO:0000107">
    <property type="term" value="F:imidazoleglycerol-phosphate synthase activity"/>
    <property type="evidence" value="ECO:0007669"/>
    <property type="project" value="UniProtKB-UniRule"/>
</dbReference>
<dbReference type="GO" id="GO:0016829">
    <property type="term" value="F:lyase activity"/>
    <property type="evidence" value="ECO:0007669"/>
    <property type="project" value="UniProtKB-KW"/>
</dbReference>
<dbReference type="GO" id="GO:0000105">
    <property type="term" value="P:L-histidine biosynthetic process"/>
    <property type="evidence" value="ECO:0007669"/>
    <property type="project" value="UniProtKB-UniRule"/>
</dbReference>
<dbReference type="CDD" id="cd04731">
    <property type="entry name" value="HisF"/>
    <property type="match status" value="1"/>
</dbReference>
<dbReference type="FunFam" id="3.20.20.70:FF:000006">
    <property type="entry name" value="Imidazole glycerol phosphate synthase subunit HisF"/>
    <property type="match status" value="1"/>
</dbReference>
<dbReference type="Gene3D" id="3.20.20.70">
    <property type="entry name" value="Aldolase class I"/>
    <property type="match status" value="1"/>
</dbReference>
<dbReference type="HAMAP" id="MF_01013">
    <property type="entry name" value="HisF"/>
    <property type="match status" value="1"/>
</dbReference>
<dbReference type="InterPro" id="IPR013785">
    <property type="entry name" value="Aldolase_TIM"/>
</dbReference>
<dbReference type="InterPro" id="IPR006062">
    <property type="entry name" value="His_biosynth"/>
</dbReference>
<dbReference type="InterPro" id="IPR004651">
    <property type="entry name" value="HisF"/>
</dbReference>
<dbReference type="InterPro" id="IPR050064">
    <property type="entry name" value="IGPS_HisA/HisF"/>
</dbReference>
<dbReference type="InterPro" id="IPR011060">
    <property type="entry name" value="RibuloseP-bd_barrel"/>
</dbReference>
<dbReference type="NCBIfam" id="TIGR00735">
    <property type="entry name" value="hisF"/>
    <property type="match status" value="1"/>
</dbReference>
<dbReference type="PANTHER" id="PTHR21235:SF2">
    <property type="entry name" value="IMIDAZOLE GLYCEROL PHOSPHATE SYNTHASE HISHF"/>
    <property type="match status" value="1"/>
</dbReference>
<dbReference type="PANTHER" id="PTHR21235">
    <property type="entry name" value="IMIDAZOLE GLYCEROL PHOSPHATE SYNTHASE SUBUNIT HISF/H IGP SYNTHASE SUBUNIT HISF/H"/>
    <property type="match status" value="1"/>
</dbReference>
<dbReference type="Pfam" id="PF00977">
    <property type="entry name" value="His_biosynth"/>
    <property type="match status" value="1"/>
</dbReference>
<dbReference type="SUPFAM" id="SSF51366">
    <property type="entry name" value="Ribulose-phoshate binding barrel"/>
    <property type="match status" value="1"/>
</dbReference>
<proteinExistence type="inferred from homology"/>
<evidence type="ECO:0000255" key="1">
    <source>
        <dbReference type="HAMAP-Rule" id="MF_01013"/>
    </source>
</evidence>
<evidence type="ECO:0000305" key="2"/>
<protein>
    <recommendedName>
        <fullName evidence="1">Imidazole glycerol phosphate synthase subunit HisF</fullName>
        <ecNumber evidence="1">4.3.2.10</ecNumber>
    </recommendedName>
    <alternativeName>
        <fullName evidence="1">IGP synthase cyclase subunit</fullName>
    </alternativeName>
    <alternativeName>
        <fullName evidence="1">IGP synthase subunit HisF</fullName>
    </alternativeName>
    <alternativeName>
        <fullName evidence="1">ImGP synthase subunit HisF</fullName>
        <shortName evidence="1">IGPS subunit HisF</shortName>
    </alternativeName>
</protein>
<name>HIS6_GLUDA</name>
<accession>A9GZW9</accession>
<accession>B5ZJK1</accession>
<organism>
    <name type="scientific">Gluconacetobacter diazotrophicus (strain ATCC 49037 / DSM 5601 / CCUG 37298 / CIP 103539 / LMG 7603 / PAl5)</name>
    <dbReference type="NCBI Taxonomy" id="272568"/>
    <lineage>
        <taxon>Bacteria</taxon>
        <taxon>Pseudomonadati</taxon>
        <taxon>Pseudomonadota</taxon>
        <taxon>Alphaproteobacteria</taxon>
        <taxon>Acetobacterales</taxon>
        <taxon>Acetobacteraceae</taxon>
        <taxon>Gluconacetobacter</taxon>
    </lineage>
</organism>
<keyword id="KW-0028">Amino-acid biosynthesis</keyword>
<keyword id="KW-0963">Cytoplasm</keyword>
<keyword id="KW-0368">Histidine biosynthesis</keyword>
<keyword id="KW-0456">Lyase</keyword>
<keyword id="KW-1185">Reference proteome</keyword>
<gene>
    <name evidence="1" type="primary">hisF</name>
    <name type="ordered locus">GDI0069</name>
    <name type="ordered locus">Gdia_1623</name>
</gene>
<comment type="function">
    <text evidence="1">IGPS catalyzes the conversion of PRFAR and glutamine to IGP, AICAR and glutamate. The HisF subunit catalyzes the cyclization activity that produces IGP and AICAR from PRFAR using the ammonia provided by the HisH subunit.</text>
</comment>
<comment type="catalytic activity">
    <reaction evidence="1">
        <text>5-[(5-phospho-1-deoxy-D-ribulos-1-ylimino)methylamino]-1-(5-phospho-beta-D-ribosyl)imidazole-4-carboxamide + L-glutamine = D-erythro-1-(imidazol-4-yl)glycerol 3-phosphate + 5-amino-1-(5-phospho-beta-D-ribosyl)imidazole-4-carboxamide + L-glutamate + H(+)</text>
        <dbReference type="Rhea" id="RHEA:24793"/>
        <dbReference type="ChEBI" id="CHEBI:15378"/>
        <dbReference type="ChEBI" id="CHEBI:29985"/>
        <dbReference type="ChEBI" id="CHEBI:58278"/>
        <dbReference type="ChEBI" id="CHEBI:58359"/>
        <dbReference type="ChEBI" id="CHEBI:58475"/>
        <dbReference type="ChEBI" id="CHEBI:58525"/>
        <dbReference type="EC" id="4.3.2.10"/>
    </reaction>
</comment>
<comment type="pathway">
    <text evidence="1">Amino-acid biosynthesis; L-histidine biosynthesis; L-histidine from 5-phospho-alpha-D-ribose 1-diphosphate: step 5/9.</text>
</comment>
<comment type="subunit">
    <text evidence="1">Heterodimer of HisH and HisF.</text>
</comment>
<comment type="subcellular location">
    <subcellularLocation>
        <location evidence="1">Cytoplasm</location>
    </subcellularLocation>
</comment>
<comment type="similarity">
    <text evidence="1">Belongs to the HisA/HisF family.</text>
</comment>
<reference key="1">
    <citation type="journal article" date="2009" name="BMC Genomics">
        <title>Complete genome sequence of the sugarcane nitrogen-fixing endophyte Gluconacetobacter diazotrophicus Pal5.</title>
        <authorList>
            <person name="Bertalan M."/>
            <person name="Albano R."/>
            <person name="de Padua V."/>
            <person name="Rouws L."/>
            <person name="Rojas C."/>
            <person name="Hemerly A."/>
            <person name="Teixeira K."/>
            <person name="Schwab S."/>
            <person name="Araujo J."/>
            <person name="Oliveira A."/>
            <person name="Franca L."/>
            <person name="Magalhaes V."/>
            <person name="Alqueres S."/>
            <person name="Cardoso A."/>
            <person name="Almeida W."/>
            <person name="Loureiro M.M."/>
            <person name="Nogueira E."/>
            <person name="Cidade D."/>
            <person name="Oliveira D."/>
            <person name="Simao T."/>
            <person name="Macedo J."/>
            <person name="Valadao A."/>
            <person name="Dreschsel M."/>
            <person name="Freitas F."/>
            <person name="Vidal M."/>
            <person name="Guedes H."/>
            <person name="Rodrigues E."/>
            <person name="Meneses C."/>
            <person name="Brioso P."/>
            <person name="Pozzer L."/>
            <person name="Figueiredo D."/>
            <person name="Montano H."/>
            <person name="Junior J."/>
            <person name="de Souza Filho G."/>
            <person name="Martin Quintana Flores V."/>
            <person name="Ferreira B."/>
            <person name="Branco A."/>
            <person name="Gonzalez P."/>
            <person name="Guillobel H."/>
            <person name="Lemos M."/>
            <person name="Seibel L."/>
            <person name="Macedo J."/>
            <person name="Alves-Ferreira M."/>
            <person name="Sachetto-Martins G."/>
            <person name="Coelho A."/>
            <person name="Santos E."/>
            <person name="Amaral G."/>
            <person name="Neves A."/>
            <person name="Pacheco A.B."/>
            <person name="Carvalho D."/>
            <person name="Lery L."/>
            <person name="Bisch P."/>
            <person name="Rossle S.C."/>
            <person name="Urmenyi T."/>
            <person name="Rael Pereira A."/>
            <person name="Silva R."/>
            <person name="Rondinelli E."/>
            <person name="von Kruger W."/>
            <person name="Martins O."/>
            <person name="Baldani J.I."/>
            <person name="Ferreira P.C."/>
        </authorList>
    </citation>
    <scope>NUCLEOTIDE SEQUENCE [LARGE SCALE GENOMIC DNA]</scope>
    <source>
        <strain>ATCC 49037 / DSM 5601 / CCUG 37298 / CIP 103539 / LMG 7603 / PAl5</strain>
    </source>
</reference>
<reference key="2">
    <citation type="journal article" date="2010" name="Stand. Genomic Sci.">
        <title>Two genome sequences of the same bacterial strain, Gluconacetobacter diazotrophicus PAl 5, suggest a new standard in genome sequence submission.</title>
        <authorList>
            <person name="Giongo A."/>
            <person name="Tyler H.L."/>
            <person name="Zipperer U.N."/>
            <person name="Triplett E.W."/>
        </authorList>
    </citation>
    <scope>NUCLEOTIDE SEQUENCE [LARGE SCALE GENOMIC DNA]</scope>
    <source>
        <strain>ATCC 49037 / DSM 5601 / CCUG 37298 / CIP 103539 / LMG 7603 / PAl5</strain>
    </source>
</reference>